<reference key="1">
    <citation type="journal article" date="2002" name="Nature">
        <title>Comparison of the genomes of two Xanthomonas pathogens with differing host specificities.</title>
        <authorList>
            <person name="da Silva A.C.R."/>
            <person name="Ferro J.A."/>
            <person name="Reinach F.C."/>
            <person name="Farah C.S."/>
            <person name="Furlan L.R."/>
            <person name="Quaggio R.B."/>
            <person name="Monteiro-Vitorello C.B."/>
            <person name="Van Sluys M.A."/>
            <person name="Almeida N.F. Jr."/>
            <person name="Alves L.M.C."/>
            <person name="do Amaral A.M."/>
            <person name="Bertolini M.C."/>
            <person name="Camargo L.E.A."/>
            <person name="Camarotte G."/>
            <person name="Cannavan F."/>
            <person name="Cardozo J."/>
            <person name="Chambergo F."/>
            <person name="Ciapina L.P."/>
            <person name="Cicarelli R.M.B."/>
            <person name="Coutinho L.L."/>
            <person name="Cursino-Santos J.R."/>
            <person name="El-Dorry H."/>
            <person name="Faria J.B."/>
            <person name="Ferreira A.J.S."/>
            <person name="Ferreira R.C.C."/>
            <person name="Ferro M.I.T."/>
            <person name="Formighieri E.F."/>
            <person name="Franco M.C."/>
            <person name="Greggio C.C."/>
            <person name="Gruber A."/>
            <person name="Katsuyama A.M."/>
            <person name="Kishi L.T."/>
            <person name="Leite R.P."/>
            <person name="Lemos E.G.M."/>
            <person name="Lemos M.V.F."/>
            <person name="Locali E.C."/>
            <person name="Machado M.A."/>
            <person name="Madeira A.M.B.N."/>
            <person name="Martinez-Rossi N.M."/>
            <person name="Martins E.C."/>
            <person name="Meidanis J."/>
            <person name="Menck C.F.M."/>
            <person name="Miyaki C.Y."/>
            <person name="Moon D.H."/>
            <person name="Moreira L.M."/>
            <person name="Novo M.T.M."/>
            <person name="Okura V.K."/>
            <person name="Oliveira M.C."/>
            <person name="Oliveira V.R."/>
            <person name="Pereira H.A."/>
            <person name="Rossi A."/>
            <person name="Sena J.A.D."/>
            <person name="Silva C."/>
            <person name="de Souza R.F."/>
            <person name="Spinola L.A.F."/>
            <person name="Takita M.A."/>
            <person name="Tamura R.E."/>
            <person name="Teixeira E.C."/>
            <person name="Tezza R.I.D."/>
            <person name="Trindade dos Santos M."/>
            <person name="Truffi D."/>
            <person name="Tsai S.M."/>
            <person name="White F.F."/>
            <person name="Setubal J.C."/>
            <person name="Kitajima J.P."/>
        </authorList>
    </citation>
    <scope>NUCLEOTIDE SEQUENCE [LARGE SCALE GENOMIC DNA]</scope>
    <source>
        <strain>306</strain>
    </source>
</reference>
<dbReference type="EC" id="6.3.2.8" evidence="1"/>
<dbReference type="EMBL" id="AE008923">
    <property type="protein sequence ID" value="AAM35668.1"/>
    <property type="molecule type" value="Genomic_DNA"/>
</dbReference>
<dbReference type="RefSeq" id="WP_011050531.1">
    <property type="nucleotide sequence ID" value="NC_003919.1"/>
</dbReference>
<dbReference type="SMR" id="Q8PPA7"/>
<dbReference type="GeneID" id="66909974"/>
<dbReference type="KEGG" id="xac:XAC0780"/>
<dbReference type="eggNOG" id="COG0773">
    <property type="taxonomic scope" value="Bacteria"/>
</dbReference>
<dbReference type="HOGENOM" id="CLU_028104_2_2_6"/>
<dbReference type="UniPathway" id="UPA00219"/>
<dbReference type="Proteomes" id="UP000000576">
    <property type="component" value="Chromosome"/>
</dbReference>
<dbReference type="GO" id="GO:0005737">
    <property type="term" value="C:cytoplasm"/>
    <property type="evidence" value="ECO:0007669"/>
    <property type="project" value="UniProtKB-SubCell"/>
</dbReference>
<dbReference type="GO" id="GO:0005524">
    <property type="term" value="F:ATP binding"/>
    <property type="evidence" value="ECO:0007669"/>
    <property type="project" value="UniProtKB-UniRule"/>
</dbReference>
<dbReference type="GO" id="GO:0008763">
    <property type="term" value="F:UDP-N-acetylmuramate-L-alanine ligase activity"/>
    <property type="evidence" value="ECO:0007669"/>
    <property type="project" value="UniProtKB-UniRule"/>
</dbReference>
<dbReference type="GO" id="GO:0051301">
    <property type="term" value="P:cell division"/>
    <property type="evidence" value="ECO:0007669"/>
    <property type="project" value="UniProtKB-KW"/>
</dbReference>
<dbReference type="GO" id="GO:0071555">
    <property type="term" value="P:cell wall organization"/>
    <property type="evidence" value="ECO:0007669"/>
    <property type="project" value="UniProtKB-KW"/>
</dbReference>
<dbReference type="GO" id="GO:0009252">
    <property type="term" value="P:peptidoglycan biosynthetic process"/>
    <property type="evidence" value="ECO:0007669"/>
    <property type="project" value="UniProtKB-UniRule"/>
</dbReference>
<dbReference type="GO" id="GO:0008360">
    <property type="term" value="P:regulation of cell shape"/>
    <property type="evidence" value="ECO:0007669"/>
    <property type="project" value="UniProtKB-KW"/>
</dbReference>
<dbReference type="Gene3D" id="3.90.190.20">
    <property type="entry name" value="Mur ligase, C-terminal domain"/>
    <property type="match status" value="1"/>
</dbReference>
<dbReference type="Gene3D" id="3.40.1190.10">
    <property type="entry name" value="Mur-like, catalytic domain"/>
    <property type="match status" value="1"/>
</dbReference>
<dbReference type="Gene3D" id="3.40.50.720">
    <property type="entry name" value="NAD(P)-binding Rossmann-like Domain"/>
    <property type="match status" value="1"/>
</dbReference>
<dbReference type="HAMAP" id="MF_00046">
    <property type="entry name" value="MurC"/>
    <property type="match status" value="1"/>
</dbReference>
<dbReference type="InterPro" id="IPR036565">
    <property type="entry name" value="Mur-like_cat_sf"/>
</dbReference>
<dbReference type="InterPro" id="IPR004101">
    <property type="entry name" value="Mur_ligase_C"/>
</dbReference>
<dbReference type="InterPro" id="IPR036615">
    <property type="entry name" value="Mur_ligase_C_dom_sf"/>
</dbReference>
<dbReference type="InterPro" id="IPR013221">
    <property type="entry name" value="Mur_ligase_cen"/>
</dbReference>
<dbReference type="InterPro" id="IPR000713">
    <property type="entry name" value="Mur_ligase_N"/>
</dbReference>
<dbReference type="InterPro" id="IPR050061">
    <property type="entry name" value="MurCDEF_pg_biosynth"/>
</dbReference>
<dbReference type="InterPro" id="IPR005758">
    <property type="entry name" value="UDP-N-AcMur_Ala_ligase_MurC"/>
</dbReference>
<dbReference type="NCBIfam" id="TIGR01082">
    <property type="entry name" value="murC"/>
    <property type="match status" value="1"/>
</dbReference>
<dbReference type="PANTHER" id="PTHR43445:SF3">
    <property type="entry name" value="UDP-N-ACETYLMURAMATE--L-ALANINE LIGASE"/>
    <property type="match status" value="1"/>
</dbReference>
<dbReference type="PANTHER" id="PTHR43445">
    <property type="entry name" value="UDP-N-ACETYLMURAMATE--L-ALANINE LIGASE-RELATED"/>
    <property type="match status" value="1"/>
</dbReference>
<dbReference type="Pfam" id="PF01225">
    <property type="entry name" value="Mur_ligase"/>
    <property type="match status" value="1"/>
</dbReference>
<dbReference type="Pfam" id="PF02875">
    <property type="entry name" value="Mur_ligase_C"/>
    <property type="match status" value="1"/>
</dbReference>
<dbReference type="Pfam" id="PF08245">
    <property type="entry name" value="Mur_ligase_M"/>
    <property type="match status" value="1"/>
</dbReference>
<dbReference type="SUPFAM" id="SSF51984">
    <property type="entry name" value="MurCD N-terminal domain"/>
    <property type="match status" value="1"/>
</dbReference>
<dbReference type="SUPFAM" id="SSF53623">
    <property type="entry name" value="MurD-like peptide ligases, catalytic domain"/>
    <property type="match status" value="1"/>
</dbReference>
<dbReference type="SUPFAM" id="SSF53244">
    <property type="entry name" value="MurD-like peptide ligases, peptide-binding domain"/>
    <property type="match status" value="1"/>
</dbReference>
<keyword id="KW-0067">ATP-binding</keyword>
<keyword id="KW-0131">Cell cycle</keyword>
<keyword id="KW-0132">Cell division</keyword>
<keyword id="KW-0133">Cell shape</keyword>
<keyword id="KW-0961">Cell wall biogenesis/degradation</keyword>
<keyword id="KW-0963">Cytoplasm</keyword>
<keyword id="KW-0436">Ligase</keyword>
<keyword id="KW-0547">Nucleotide-binding</keyword>
<keyword id="KW-0573">Peptidoglycan synthesis</keyword>
<name>MURC_XANAC</name>
<proteinExistence type="inferred from homology"/>
<sequence length="477" mass="50593">MIRRLQDSGDLVRAFPRVHFVGIGGTGMSGIAEVMLTLGYEVSGSDNADNAATRRLAKLGARVMRGHSAANVLGTDCVVVSSAIREDNPELMEARSQRIPIMPRAAMLAELMRFRRGIAVAGTHGKTTTTSLAAAVLSEGGLDPTFVIGGQLLAAGANAKLGGGQWLVAEADESDGSFLRLNPLMAVITNIDADHLENYGNDFARVQAAFAEFLQRLPFYGLALLCIDDPEVAALAGKTPRHVMSYGMSENADVRAEDVVQDGPCMRFTLRLPEGTTTPVTLALPGRHNVLNALAAAAIGWQLGVAPDTIARALENFAGIGRRFNDLGEVTTSTGARVRVVDDYGHHPRELEAVFAAARGGWPDKRLVVAFQPHRYSRTRDQFDAFAAVLSTVDALVLSEVYPAGEAPIPGADSRALARAIRARGRSEPVVVGQIAGLAEVLPDVLQDGDLLLMMGAGDIGYVAQHIINNGFVGEPA</sequence>
<gene>
    <name evidence="1" type="primary">murC</name>
    <name type="ordered locus">XAC0780</name>
</gene>
<protein>
    <recommendedName>
        <fullName evidence="1">UDP-N-acetylmuramate--L-alanine ligase</fullName>
        <ecNumber evidence="1">6.3.2.8</ecNumber>
    </recommendedName>
    <alternativeName>
        <fullName evidence="1">UDP-N-acetylmuramoyl-L-alanine synthetase</fullName>
    </alternativeName>
</protein>
<organism>
    <name type="scientific">Xanthomonas axonopodis pv. citri (strain 306)</name>
    <dbReference type="NCBI Taxonomy" id="190486"/>
    <lineage>
        <taxon>Bacteria</taxon>
        <taxon>Pseudomonadati</taxon>
        <taxon>Pseudomonadota</taxon>
        <taxon>Gammaproteobacteria</taxon>
        <taxon>Lysobacterales</taxon>
        <taxon>Lysobacteraceae</taxon>
        <taxon>Xanthomonas</taxon>
    </lineage>
</organism>
<evidence type="ECO:0000255" key="1">
    <source>
        <dbReference type="HAMAP-Rule" id="MF_00046"/>
    </source>
</evidence>
<comment type="function">
    <text evidence="1">Cell wall formation.</text>
</comment>
<comment type="catalytic activity">
    <reaction evidence="1">
        <text>UDP-N-acetyl-alpha-D-muramate + L-alanine + ATP = UDP-N-acetyl-alpha-D-muramoyl-L-alanine + ADP + phosphate + H(+)</text>
        <dbReference type="Rhea" id="RHEA:23372"/>
        <dbReference type="ChEBI" id="CHEBI:15378"/>
        <dbReference type="ChEBI" id="CHEBI:30616"/>
        <dbReference type="ChEBI" id="CHEBI:43474"/>
        <dbReference type="ChEBI" id="CHEBI:57972"/>
        <dbReference type="ChEBI" id="CHEBI:70757"/>
        <dbReference type="ChEBI" id="CHEBI:83898"/>
        <dbReference type="ChEBI" id="CHEBI:456216"/>
        <dbReference type="EC" id="6.3.2.8"/>
    </reaction>
</comment>
<comment type="pathway">
    <text evidence="1">Cell wall biogenesis; peptidoglycan biosynthesis.</text>
</comment>
<comment type="subcellular location">
    <subcellularLocation>
        <location evidence="1">Cytoplasm</location>
    </subcellularLocation>
</comment>
<comment type="similarity">
    <text evidence="1">Belongs to the MurCDEF family.</text>
</comment>
<accession>Q8PPA7</accession>
<feature type="chain" id="PRO_0000182186" description="UDP-N-acetylmuramate--L-alanine ligase">
    <location>
        <begin position="1"/>
        <end position="477"/>
    </location>
</feature>
<feature type="binding site" evidence="1">
    <location>
        <begin position="122"/>
        <end position="128"/>
    </location>
    <ligand>
        <name>ATP</name>
        <dbReference type="ChEBI" id="CHEBI:30616"/>
    </ligand>
</feature>